<evidence type="ECO:0000256" key="1">
    <source>
        <dbReference type="SAM" id="MobiDB-lite"/>
    </source>
</evidence>
<organism>
    <name type="scientific">Arabidopsis thaliana</name>
    <name type="common">Mouse-ear cress</name>
    <dbReference type="NCBI Taxonomy" id="3702"/>
    <lineage>
        <taxon>Eukaryota</taxon>
        <taxon>Viridiplantae</taxon>
        <taxon>Streptophyta</taxon>
        <taxon>Embryophyta</taxon>
        <taxon>Tracheophyta</taxon>
        <taxon>Spermatophyta</taxon>
        <taxon>Magnoliopsida</taxon>
        <taxon>eudicotyledons</taxon>
        <taxon>Gunneridae</taxon>
        <taxon>Pentapetalae</taxon>
        <taxon>rosids</taxon>
        <taxon>malvids</taxon>
        <taxon>Brassicales</taxon>
        <taxon>Brassicaceae</taxon>
        <taxon>Camelineae</taxon>
        <taxon>Arabidopsis</taxon>
    </lineage>
</organism>
<accession>Q9LIR1</accession>
<reference key="1">
    <citation type="journal article" date="2000" name="DNA Res.">
        <title>Structural analysis of Arabidopsis thaliana chromosome 3. II. Sequence features of the 4,251,695 bp regions covered by 90 P1, TAC and BAC clones.</title>
        <authorList>
            <person name="Kaneko T."/>
            <person name="Katoh T."/>
            <person name="Sato S."/>
            <person name="Nakamura Y."/>
            <person name="Asamizu E."/>
            <person name="Tabata S."/>
        </authorList>
    </citation>
    <scope>NUCLEOTIDE SEQUENCE [LARGE SCALE GENOMIC DNA]</scope>
    <source>
        <strain>cv. Columbia</strain>
    </source>
</reference>
<reference key="2">
    <citation type="journal article" date="2017" name="Plant J.">
        <title>Araport11: a complete reannotation of the Arabidopsis thaliana reference genome.</title>
        <authorList>
            <person name="Cheng C.Y."/>
            <person name="Krishnakumar V."/>
            <person name="Chan A.P."/>
            <person name="Thibaud-Nissen F."/>
            <person name="Schobel S."/>
            <person name="Town C.D."/>
        </authorList>
    </citation>
    <scope>GENOME REANNOTATION</scope>
    <source>
        <strain>cv. Columbia</strain>
    </source>
</reference>
<name>FB182_ARATH</name>
<proteinExistence type="predicted"/>
<keyword id="KW-1185">Reference proteome</keyword>
<sequence>MRSRQLHNVSEDRETLSRRNKRSKTSLNGHIPIDLLIEIFLKLPVKSIATCRSVSKFWTYVLGRQDFTELFLTKSSSRPQLLFACANDNGYFFFSSNQPQNLDENSSPIAAYPLTHVPKSRDLGPPINGLVSLRGERILKGRIRPVDVSIIYNPSTGESLTLPKTNMTRKKIYTVTSFLGYDPIEKQYKVLSMNMSYEKHPKCEGYQVLTLGTGKLSWRMIKCCLNYQHPLKNSEICINGVLYYLAMVNGSSWPTRAVVCFDIRSEMFNFMEVYRELSYTTTLINYNNGKLGMLMGQEAHKTISGICRSFELWVLEDTVKHEWSKHVYLLPPLWKDAVANTRLYFAGMIGTSEIVLFRPDEPLCVFYYNIDRNTIKRVGIRGLEAFKYFRIFLNHVENVKLF</sequence>
<gene>
    <name type="ordered locus">At3g23960</name>
    <name type="ORF">F14O13.15</name>
</gene>
<protein>
    <recommendedName>
        <fullName>Putative F-box protein At3g23960</fullName>
    </recommendedName>
</protein>
<dbReference type="EMBL" id="AP001297">
    <property type="protein sequence ID" value="BAB03014.1"/>
    <property type="molecule type" value="Genomic_DNA"/>
</dbReference>
<dbReference type="EMBL" id="CP002686">
    <property type="protein sequence ID" value="AEE76839.1"/>
    <property type="molecule type" value="Genomic_DNA"/>
</dbReference>
<dbReference type="RefSeq" id="NP_189038.1">
    <property type="nucleotide sequence ID" value="NM_113301.2"/>
</dbReference>
<dbReference type="SMR" id="Q9LIR1"/>
<dbReference type="FunCoup" id="Q9LIR1">
    <property type="interactions" value="34"/>
</dbReference>
<dbReference type="STRING" id="3702.Q9LIR1"/>
<dbReference type="iPTMnet" id="Q9LIR1"/>
<dbReference type="PaxDb" id="3702-AT3G23960.1"/>
<dbReference type="EnsemblPlants" id="AT3G23960.1">
    <property type="protein sequence ID" value="AT3G23960.1"/>
    <property type="gene ID" value="AT3G23960"/>
</dbReference>
<dbReference type="GeneID" id="821980"/>
<dbReference type="Gramene" id="AT3G23960.1">
    <property type="protein sequence ID" value="AT3G23960.1"/>
    <property type="gene ID" value="AT3G23960"/>
</dbReference>
<dbReference type="KEGG" id="ath:AT3G23960"/>
<dbReference type="Araport" id="AT3G23960"/>
<dbReference type="TAIR" id="AT3G23960"/>
<dbReference type="eggNOG" id="ENOG502SNHU">
    <property type="taxonomic scope" value="Eukaryota"/>
</dbReference>
<dbReference type="HOGENOM" id="CLU_027176_8_1_1"/>
<dbReference type="InParanoid" id="Q9LIR1"/>
<dbReference type="OMA" id="HNEICIN"/>
<dbReference type="PhylomeDB" id="Q9LIR1"/>
<dbReference type="PRO" id="PR:Q9LIR1"/>
<dbReference type="Proteomes" id="UP000006548">
    <property type="component" value="Chromosome 3"/>
</dbReference>
<dbReference type="ExpressionAtlas" id="Q9LIR1">
    <property type="expression patterns" value="baseline and differential"/>
</dbReference>
<dbReference type="InterPro" id="IPR013187">
    <property type="entry name" value="F-box-assoc_dom_typ3"/>
</dbReference>
<dbReference type="InterPro" id="IPR017451">
    <property type="entry name" value="F-box-assoc_interact_dom"/>
</dbReference>
<dbReference type="InterPro" id="IPR036047">
    <property type="entry name" value="F-box-like_dom_sf"/>
</dbReference>
<dbReference type="InterPro" id="IPR001810">
    <property type="entry name" value="F-box_dom"/>
</dbReference>
<dbReference type="NCBIfam" id="TIGR01640">
    <property type="entry name" value="F_box_assoc_1"/>
    <property type="match status" value="1"/>
</dbReference>
<dbReference type="PANTHER" id="PTHR31111">
    <property type="entry name" value="BNAA05G37150D PROTEIN-RELATED"/>
    <property type="match status" value="1"/>
</dbReference>
<dbReference type="PANTHER" id="PTHR31111:SF62">
    <property type="entry name" value="F-BOX DOMAIN-CONTAINING PROTEIN"/>
    <property type="match status" value="1"/>
</dbReference>
<dbReference type="Pfam" id="PF00646">
    <property type="entry name" value="F-box"/>
    <property type="match status" value="1"/>
</dbReference>
<dbReference type="Pfam" id="PF08268">
    <property type="entry name" value="FBA_3"/>
    <property type="match status" value="1"/>
</dbReference>
<dbReference type="SMART" id="SM00256">
    <property type="entry name" value="FBOX"/>
    <property type="match status" value="1"/>
</dbReference>
<dbReference type="SUPFAM" id="SSF81383">
    <property type="entry name" value="F-box domain"/>
    <property type="match status" value="1"/>
</dbReference>
<feature type="chain" id="PRO_0000283452" description="Putative F-box protein At3g23960">
    <location>
        <begin position="1"/>
        <end position="402"/>
    </location>
</feature>
<feature type="domain" description="F-box">
    <location>
        <begin position="26"/>
        <end position="73"/>
    </location>
</feature>
<feature type="region of interest" description="Disordered" evidence="1">
    <location>
        <begin position="1"/>
        <end position="23"/>
    </location>
</feature>